<organism>
    <name type="scientific">Rhynchosporium secalis</name>
    <name type="common">Barley scald fungus</name>
    <dbReference type="NCBI Taxonomy" id="38038"/>
    <lineage>
        <taxon>Eukaryota</taxon>
        <taxon>Fungi</taxon>
        <taxon>Dikarya</taxon>
        <taxon>Ascomycota</taxon>
        <taxon>Pezizomycotina</taxon>
        <taxon>Leotiomycetes</taxon>
        <taxon>Helotiales</taxon>
        <taxon>Ploettnerulaceae</taxon>
        <taxon>Rhynchosporium</taxon>
    </lineage>
</organism>
<accession>P53376</accession>
<proteinExistence type="inferred from homology"/>
<keyword id="KW-0963">Cytoplasm</keyword>
<keyword id="KW-0206">Cytoskeleton</keyword>
<keyword id="KW-0342">GTP-binding</keyword>
<keyword id="KW-0460">Magnesium</keyword>
<keyword id="KW-0479">Metal-binding</keyword>
<keyword id="KW-0493">Microtubule</keyword>
<keyword id="KW-0547">Nucleotide-binding</keyword>
<comment type="function">
    <text>Tubulin is the major constituent of microtubules, a cylinder consisting of laterally associated linear protofilaments composed of alpha- and beta-tubulin heterodimers. Microtubules grow by the addition of GTP-tubulin dimers to the microtubule end, where a stabilizing cap forms. Below the cap, tubulin dimers are in GDP-bound state, owing to GTPase activity of alpha-tubulin.</text>
</comment>
<comment type="cofactor">
    <cofactor evidence="1">
        <name>Mg(2+)</name>
        <dbReference type="ChEBI" id="CHEBI:18420"/>
    </cofactor>
</comment>
<comment type="subunit">
    <text>Dimer of alpha and beta chains. A typical microtubule is a hollow water-filled tube with an outer diameter of 25 nm and an inner diameter of 15 nM. Alpha-beta heterodimers associate head-to-tail to form protofilaments running lengthwise along the microtubule wall with the beta-tubulin subunit facing the microtubule plus end conferring a structural polarity. Microtubules usually have 13 protofilaments but different protofilament numbers can be found in some organisms and specialized cells.</text>
</comment>
<comment type="subcellular location">
    <subcellularLocation>
        <location>Cytoplasm</location>
        <location>Cytoskeleton</location>
    </subcellularLocation>
</comment>
<comment type="similarity">
    <text evidence="4">Belongs to the tubulin family.</text>
</comment>
<sequence length="447" mass="49908">MREIVHLQTGQCGNQIGAAFWQTISGEHGLDGSGVYNGTSDLQLERLNVYFNEASGNKYVPRAVLVDLEPGTMDAVRAGPFGQLFRPDNFVFGQSGAGNNWAKGHYTEGAELVDQVLDVVRREAEGCDCLQGFQITHSLGGGTGAGMGTLLISKIREEFPDRMMATFSVVPSPKVSDTVVEPYNATLSIHQLVENSDETFCIDNEALYDICMRTLKLTNPSYGDLNHLVSAVMSGVTTCLRFPGQLNSDLRKLAVNMVPFPRLHFFMVGFAPLTSRGAHSFRAVTVPELTQQMFDPKNMMAASDFRNGRYLTCSAIFRGKVSMKEVEDQMRNVQNKNSSYFVEWIPTNVQTALCSIPPRGLKMSSTFVGNSTSIQELFKRIGDQFTRMFRRKAFLHWYTGEGMDEMEFTEAESNMNDLVSEYQQYQDASISEGEEEYEEEAPMEPEE</sequence>
<evidence type="ECO:0000250" key="1">
    <source>
        <dbReference type="UniProtKB" id="P68363"/>
    </source>
</evidence>
<evidence type="ECO:0000250" key="2">
    <source>
        <dbReference type="UniProtKB" id="Q13509"/>
    </source>
</evidence>
<evidence type="ECO:0000256" key="3">
    <source>
        <dbReference type="SAM" id="MobiDB-lite"/>
    </source>
</evidence>
<evidence type="ECO:0000305" key="4"/>
<feature type="chain" id="PRO_0000048428" description="Tubulin beta chain">
    <location>
        <begin position="1"/>
        <end position="447"/>
    </location>
</feature>
<feature type="region of interest" description="Disordered" evidence="3">
    <location>
        <begin position="421"/>
        <end position="447"/>
    </location>
</feature>
<feature type="compositionally biased region" description="Acidic residues" evidence="3">
    <location>
        <begin position="432"/>
        <end position="447"/>
    </location>
</feature>
<feature type="binding site" evidence="2">
    <location>
        <position position="11"/>
    </location>
    <ligand>
        <name>GTP</name>
        <dbReference type="ChEBI" id="CHEBI:37565"/>
    </ligand>
</feature>
<feature type="binding site" evidence="1">
    <location>
        <position position="69"/>
    </location>
    <ligand>
        <name>GTP</name>
        <dbReference type="ChEBI" id="CHEBI:37565"/>
    </ligand>
</feature>
<feature type="binding site" evidence="1">
    <location>
        <position position="69"/>
    </location>
    <ligand>
        <name>Mg(2+)</name>
        <dbReference type="ChEBI" id="CHEBI:18420"/>
    </ligand>
</feature>
<feature type="binding site" evidence="2">
    <location>
        <position position="138"/>
    </location>
    <ligand>
        <name>GTP</name>
        <dbReference type="ChEBI" id="CHEBI:37565"/>
    </ligand>
</feature>
<feature type="binding site" evidence="2">
    <location>
        <position position="142"/>
    </location>
    <ligand>
        <name>GTP</name>
        <dbReference type="ChEBI" id="CHEBI:37565"/>
    </ligand>
</feature>
<feature type="binding site" evidence="2">
    <location>
        <position position="143"/>
    </location>
    <ligand>
        <name>GTP</name>
        <dbReference type="ChEBI" id="CHEBI:37565"/>
    </ligand>
</feature>
<feature type="binding site" evidence="2">
    <location>
        <position position="144"/>
    </location>
    <ligand>
        <name>GTP</name>
        <dbReference type="ChEBI" id="CHEBI:37565"/>
    </ligand>
</feature>
<feature type="binding site" evidence="2">
    <location>
        <position position="204"/>
    </location>
    <ligand>
        <name>GTP</name>
        <dbReference type="ChEBI" id="CHEBI:37565"/>
    </ligand>
</feature>
<feature type="binding site" evidence="2">
    <location>
        <position position="226"/>
    </location>
    <ligand>
        <name>GTP</name>
        <dbReference type="ChEBI" id="CHEBI:37565"/>
    </ligand>
</feature>
<feature type="sequence variant" description="Resistance to benzimidazole.">
    <original>E</original>
    <variation>G</variation>
    <location>
        <position position="198"/>
    </location>
</feature>
<name>TBB_RHYSE</name>
<protein>
    <recommendedName>
        <fullName>Tubulin beta chain</fullName>
    </recommendedName>
    <alternativeName>
        <fullName>Beta-tubulin</fullName>
    </alternativeName>
</protein>
<dbReference type="EMBL" id="X81046">
    <property type="protein sequence ID" value="CAA56936.1"/>
    <property type="molecule type" value="Genomic_DNA"/>
</dbReference>
<dbReference type="SMR" id="P53376"/>
<dbReference type="PHI-base" id="PHI:823"/>
<dbReference type="GO" id="GO:0005737">
    <property type="term" value="C:cytoplasm"/>
    <property type="evidence" value="ECO:0007669"/>
    <property type="project" value="UniProtKB-KW"/>
</dbReference>
<dbReference type="GO" id="GO:0005874">
    <property type="term" value="C:microtubule"/>
    <property type="evidence" value="ECO:0007669"/>
    <property type="project" value="UniProtKB-KW"/>
</dbReference>
<dbReference type="GO" id="GO:0005525">
    <property type="term" value="F:GTP binding"/>
    <property type="evidence" value="ECO:0007669"/>
    <property type="project" value="UniProtKB-KW"/>
</dbReference>
<dbReference type="GO" id="GO:0003924">
    <property type="term" value="F:GTPase activity"/>
    <property type="evidence" value="ECO:0007669"/>
    <property type="project" value="InterPro"/>
</dbReference>
<dbReference type="GO" id="GO:0046872">
    <property type="term" value="F:metal ion binding"/>
    <property type="evidence" value="ECO:0007669"/>
    <property type="project" value="UniProtKB-KW"/>
</dbReference>
<dbReference type="GO" id="GO:0005200">
    <property type="term" value="F:structural constituent of cytoskeleton"/>
    <property type="evidence" value="ECO:0007669"/>
    <property type="project" value="InterPro"/>
</dbReference>
<dbReference type="GO" id="GO:0007017">
    <property type="term" value="P:microtubule-based process"/>
    <property type="evidence" value="ECO:0007669"/>
    <property type="project" value="InterPro"/>
</dbReference>
<dbReference type="CDD" id="cd02187">
    <property type="entry name" value="beta_tubulin"/>
    <property type="match status" value="1"/>
</dbReference>
<dbReference type="FunFam" id="1.10.287.600:FF:000003">
    <property type="entry name" value="Tubulin beta chain"/>
    <property type="match status" value="1"/>
</dbReference>
<dbReference type="FunFam" id="3.30.1330.20:FF:000002">
    <property type="entry name" value="Tubulin beta chain"/>
    <property type="match status" value="1"/>
</dbReference>
<dbReference type="FunFam" id="3.40.50.1440:FF:000009">
    <property type="entry name" value="Tubulin beta chain"/>
    <property type="match status" value="1"/>
</dbReference>
<dbReference type="Gene3D" id="1.10.287.600">
    <property type="entry name" value="Helix hairpin bin"/>
    <property type="match status" value="1"/>
</dbReference>
<dbReference type="Gene3D" id="3.30.1330.20">
    <property type="entry name" value="Tubulin/FtsZ, C-terminal domain"/>
    <property type="match status" value="1"/>
</dbReference>
<dbReference type="Gene3D" id="3.40.50.1440">
    <property type="entry name" value="Tubulin/FtsZ, GTPase domain"/>
    <property type="match status" value="1"/>
</dbReference>
<dbReference type="InterPro" id="IPR013838">
    <property type="entry name" value="Beta-tubulin_BS"/>
</dbReference>
<dbReference type="InterPro" id="IPR002453">
    <property type="entry name" value="Beta_tubulin"/>
</dbReference>
<dbReference type="InterPro" id="IPR008280">
    <property type="entry name" value="Tub_FtsZ_C"/>
</dbReference>
<dbReference type="InterPro" id="IPR000217">
    <property type="entry name" value="Tubulin"/>
</dbReference>
<dbReference type="InterPro" id="IPR037103">
    <property type="entry name" value="Tubulin/FtsZ-like_C"/>
</dbReference>
<dbReference type="InterPro" id="IPR018316">
    <property type="entry name" value="Tubulin/FtsZ_2-layer-sand-dom"/>
</dbReference>
<dbReference type="InterPro" id="IPR036525">
    <property type="entry name" value="Tubulin/FtsZ_GTPase_sf"/>
</dbReference>
<dbReference type="InterPro" id="IPR023123">
    <property type="entry name" value="Tubulin_C"/>
</dbReference>
<dbReference type="InterPro" id="IPR017975">
    <property type="entry name" value="Tubulin_CS"/>
</dbReference>
<dbReference type="InterPro" id="IPR003008">
    <property type="entry name" value="Tubulin_FtsZ_GTPase"/>
</dbReference>
<dbReference type="PANTHER" id="PTHR11588">
    <property type="entry name" value="TUBULIN"/>
    <property type="match status" value="1"/>
</dbReference>
<dbReference type="Pfam" id="PF00091">
    <property type="entry name" value="Tubulin"/>
    <property type="match status" value="1"/>
</dbReference>
<dbReference type="Pfam" id="PF03953">
    <property type="entry name" value="Tubulin_C"/>
    <property type="match status" value="1"/>
</dbReference>
<dbReference type="PRINTS" id="PR01163">
    <property type="entry name" value="BETATUBULIN"/>
</dbReference>
<dbReference type="PRINTS" id="PR01161">
    <property type="entry name" value="TUBULIN"/>
</dbReference>
<dbReference type="SMART" id="SM00864">
    <property type="entry name" value="Tubulin"/>
    <property type="match status" value="1"/>
</dbReference>
<dbReference type="SMART" id="SM00865">
    <property type="entry name" value="Tubulin_C"/>
    <property type="match status" value="1"/>
</dbReference>
<dbReference type="SUPFAM" id="SSF55307">
    <property type="entry name" value="Tubulin C-terminal domain-like"/>
    <property type="match status" value="1"/>
</dbReference>
<dbReference type="SUPFAM" id="SSF52490">
    <property type="entry name" value="Tubulin nucleotide-binding domain-like"/>
    <property type="match status" value="1"/>
</dbReference>
<dbReference type="PROSITE" id="PS00227">
    <property type="entry name" value="TUBULIN"/>
    <property type="match status" value="1"/>
</dbReference>
<dbReference type="PROSITE" id="PS00228">
    <property type="entry name" value="TUBULIN_B_AUTOREG"/>
    <property type="match status" value="1"/>
</dbReference>
<reference key="1">
    <citation type="journal article" date="1995" name="Pestic. Sci.">
        <title>Using allele specific oligonucleotide probes to characterize benzimidazole resistance in Rhynchosporium secalis.</title>
        <authorList>
            <person name="Wheeler I.E."/>
            <person name="Kendall S.J."/>
            <person name="Butters J."/>
            <person name="Hollomon D."/>
            <person name="Hall L."/>
        </authorList>
    </citation>
    <scope>NUCLEOTIDE SEQUENCE [GENOMIC DNA]</scope>
    <source>
        <strain>765.03.01</strain>
    </source>
</reference>